<organism>
    <name type="scientific">Haemophilus influenzae (strain PittEE)</name>
    <dbReference type="NCBI Taxonomy" id="374930"/>
    <lineage>
        <taxon>Bacteria</taxon>
        <taxon>Pseudomonadati</taxon>
        <taxon>Pseudomonadota</taxon>
        <taxon>Gammaproteobacteria</taxon>
        <taxon>Pasteurellales</taxon>
        <taxon>Pasteurellaceae</taxon>
        <taxon>Haemophilus</taxon>
    </lineage>
</organism>
<gene>
    <name evidence="1" type="primary">tgt</name>
    <name type="ordered locus">CGSHiEE_01855</name>
</gene>
<dbReference type="EC" id="2.4.2.29" evidence="1"/>
<dbReference type="EMBL" id="CP000671">
    <property type="protein sequence ID" value="ABQ97844.1"/>
    <property type="molecule type" value="Genomic_DNA"/>
</dbReference>
<dbReference type="SMR" id="A5UAP3"/>
<dbReference type="KEGG" id="hip:CGSHiEE_01855"/>
<dbReference type="HOGENOM" id="CLU_022060_0_1_6"/>
<dbReference type="UniPathway" id="UPA00392"/>
<dbReference type="GO" id="GO:0005829">
    <property type="term" value="C:cytosol"/>
    <property type="evidence" value="ECO:0007669"/>
    <property type="project" value="TreeGrafter"/>
</dbReference>
<dbReference type="GO" id="GO:0046872">
    <property type="term" value="F:metal ion binding"/>
    <property type="evidence" value="ECO:0007669"/>
    <property type="project" value="UniProtKB-KW"/>
</dbReference>
<dbReference type="GO" id="GO:0008479">
    <property type="term" value="F:tRNA-guanosine(34) queuine transglycosylase activity"/>
    <property type="evidence" value="ECO:0007669"/>
    <property type="project" value="UniProtKB-UniRule"/>
</dbReference>
<dbReference type="GO" id="GO:0008616">
    <property type="term" value="P:queuosine biosynthetic process"/>
    <property type="evidence" value="ECO:0007669"/>
    <property type="project" value="UniProtKB-UniRule"/>
</dbReference>
<dbReference type="GO" id="GO:0002099">
    <property type="term" value="P:tRNA wobble guanine modification"/>
    <property type="evidence" value="ECO:0007669"/>
    <property type="project" value="TreeGrafter"/>
</dbReference>
<dbReference type="GO" id="GO:0101030">
    <property type="term" value="P:tRNA-guanine transglycosylation"/>
    <property type="evidence" value="ECO:0007669"/>
    <property type="project" value="InterPro"/>
</dbReference>
<dbReference type="FunFam" id="3.20.20.105:FF:000001">
    <property type="entry name" value="Queuine tRNA-ribosyltransferase"/>
    <property type="match status" value="1"/>
</dbReference>
<dbReference type="Gene3D" id="3.20.20.105">
    <property type="entry name" value="Queuine tRNA-ribosyltransferase-like"/>
    <property type="match status" value="1"/>
</dbReference>
<dbReference type="HAMAP" id="MF_00168">
    <property type="entry name" value="Q_tRNA_Tgt"/>
    <property type="match status" value="1"/>
</dbReference>
<dbReference type="InterPro" id="IPR050076">
    <property type="entry name" value="ArchSynthase1/Queuine_TRR"/>
</dbReference>
<dbReference type="InterPro" id="IPR004803">
    <property type="entry name" value="TGT"/>
</dbReference>
<dbReference type="InterPro" id="IPR036511">
    <property type="entry name" value="TGT-like_sf"/>
</dbReference>
<dbReference type="InterPro" id="IPR002616">
    <property type="entry name" value="tRNA_ribo_trans-like"/>
</dbReference>
<dbReference type="NCBIfam" id="TIGR00430">
    <property type="entry name" value="Q_tRNA_tgt"/>
    <property type="match status" value="1"/>
</dbReference>
<dbReference type="NCBIfam" id="TIGR00449">
    <property type="entry name" value="tgt_general"/>
    <property type="match status" value="1"/>
</dbReference>
<dbReference type="PANTHER" id="PTHR46499">
    <property type="entry name" value="QUEUINE TRNA-RIBOSYLTRANSFERASE"/>
    <property type="match status" value="1"/>
</dbReference>
<dbReference type="PANTHER" id="PTHR46499:SF1">
    <property type="entry name" value="QUEUINE TRNA-RIBOSYLTRANSFERASE"/>
    <property type="match status" value="1"/>
</dbReference>
<dbReference type="Pfam" id="PF01702">
    <property type="entry name" value="TGT"/>
    <property type="match status" value="1"/>
</dbReference>
<dbReference type="SUPFAM" id="SSF51713">
    <property type="entry name" value="tRNA-guanine transglycosylase"/>
    <property type="match status" value="1"/>
</dbReference>
<name>TGT_HAEIE</name>
<accession>A5UAP3</accession>
<proteinExistence type="inferred from homology"/>
<sequence length="382" mass="43641">MKYELDKTSGNARRGRLVFERPQGTFSVETPAFMPVGTYGTVKGMTPEEVRATGAEILLGNTFHLWLRPGQEIMRKHGDLHDFMQWHRPILTDSGGFQVFSLGKLRKITEEGVKFQNPINGERIFLSPEKSMEIQYDLGSDIVMIFDECTPYPATFDYAKKSMEMSLRWAKRSRDRFDELGNKNALFGIIQGGVFEELRKVSLEGLVNIGFDGYAVGGLAVGEPKEDMHRILEYICPQIPADKPRYLMGVGKPEDLVEGVRRGIDMFDCVMPTRNARNGHLFVTDGIVKIRNAKYRDDTSPLDPECDCYTCKNYTKAYLYHLDKCGEILGARLNTIHNLRYYQRLMAEIRQAIEDDRFDDFVVEFYARMGKPVPPLQLADKS</sequence>
<evidence type="ECO:0000255" key="1">
    <source>
        <dbReference type="HAMAP-Rule" id="MF_00168"/>
    </source>
</evidence>
<keyword id="KW-0328">Glycosyltransferase</keyword>
<keyword id="KW-0479">Metal-binding</keyword>
<keyword id="KW-0671">Queuosine biosynthesis</keyword>
<keyword id="KW-0808">Transferase</keyword>
<keyword id="KW-0819">tRNA processing</keyword>
<keyword id="KW-0862">Zinc</keyword>
<reference key="1">
    <citation type="journal article" date="2007" name="Genome Biol.">
        <title>Characterization and modeling of the Haemophilus influenzae core and supragenomes based on the complete genomic sequences of Rd and 12 clinical nontypeable strains.</title>
        <authorList>
            <person name="Hogg J.S."/>
            <person name="Hu F.Z."/>
            <person name="Janto B."/>
            <person name="Boissy R."/>
            <person name="Hayes J."/>
            <person name="Keefe R."/>
            <person name="Post J.C."/>
            <person name="Ehrlich G.D."/>
        </authorList>
    </citation>
    <scope>NUCLEOTIDE SEQUENCE [LARGE SCALE GENOMIC DNA]</scope>
    <source>
        <strain>PittEE</strain>
    </source>
</reference>
<protein>
    <recommendedName>
        <fullName evidence="1">Queuine tRNA-ribosyltransferase</fullName>
        <ecNumber evidence="1">2.4.2.29</ecNumber>
    </recommendedName>
    <alternativeName>
        <fullName evidence="1">Guanine insertion enzyme</fullName>
    </alternativeName>
    <alternativeName>
        <fullName evidence="1">tRNA-guanine transglycosylase</fullName>
    </alternativeName>
</protein>
<comment type="function">
    <text evidence="1">Catalyzes the base-exchange of a guanine (G) residue with the queuine precursor 7-aminomethyl-7-deazaguanine (PreQ1) at position 34 (anticodon wobble position) in tRNAs with GU(N) anticodons (tRNA-Asp, -Asn, -His and -Tyr). Catalysis occurs through a double-displacement mechanism. The nucleophile active site attacks the C1' of nucleotide 34 to detach the guanine base from the RNA, forming a covalent enzyme-RNA intermediate. The proton acceptor active site deprotonates the incoming PreQ1, allowing a nucleophilic attack on the C1' of the ribose to form the product. After dissociation, two additional enzymatic reactions on the tRNA convert PreQ1 to queuine (Q), resulting in the hypermodified nucleoside queuosine (7-(((4,5-cis-dihydroxy-2-cyclopenten-1-yl)amino)methyl)-7-deazaguanosine).</text>
</comment>
<comment type="catalytic activity">
    <reaction evidence="1">
        <text>7-aminomethyl-7-carbaguanine + guanosine(34) in tRNA = 7-aminomethyl-7-carbaguanosine(34) in tRNA + guanine</text>
        <dbReference type="Rhea" id="RHEA:24104"/>
        <dbReference type="Rhea" id="RHEA-COMP:10341"/>
        <dbReference type="Rhea" id="RHEA-COMP:10342"/>
        <dbReference type="ChEBI" id="CHEBI:16235"/>
        <dbReference type="ChEBI" id="CHEBI:58703"/>
        <dbReference type="ChEBI" id="CHEBI:74269"/>
        <dbReference type="ChEBI" id="CHEBI:82833"/>
        <dbReference type="EC" id="2.4.2.29"/>
    </reaction>
</comment>
<comment type="cofactor">
    <cofactor evidence="1">
        <name>Zn(2+)</name>
        <dbReference type="ChEBI" id="CHEBI:29105"/>
    </cofactor>
    <text evidence="1">Binds 1 zinc ion per subunit.</text>
</comment>
<comment type="pathway">
    <text evidence="1">tRNA modification; tRNA-queuosine biosynthesis.</text>
</comment>
<comment type="subunit">
    <text evidence="1">Homodimer. Within each dimer, one monomer is responsible for RNA recognition and catalysis, while the other monomer binds to the replacement base PreQ1.</text>
</comment>
<comment type="similarity">
    <text evidence="1">Belongs to the queuine tRNA-ribosyltransferase family.</text>
</comment>
<feature type="chain" id="PRO_1000016799" description="Queuine tRNA-ribosyltransferase">
    <location>
        <begin position="1"/>
        <end position="382"/>
    </location>
</feature>
<feature type="region of interest" description="RNA binding" evidence="1">
    <location>
        <begin position="249"/>
        <end position="255"/>
    </location>
</feature>
<feature type="region of interest" description="RNA binding; important for wobble base 34 recognition" evidence="1">
    <location>
        <begin position="273"/>
        <end position="277"/>
    </location>
</feature>
<feature type="active site" description="Proton acceptor" evidence="1">
    <location>
        <position position="93"/>
    </location>
</feature>
<feature type="active site" description="Nucleophile" evidence="1">
    <location>
        <position position="268"/>
    </location>
</feature>
<feature type="binding site" evidence="1">
    <location>
        <begin position="93"/>
        <end position="97"/>
    </location>
    <ligand>
        <name>substrate</name>
    </ligand>
</feature>
<feature type="binding site" evidence="1">
    <location>
        <position position="147"/>
    </location>
    <ligand>
        <name>substrate</name>
    </ligand>
</feature>
<feature type="binding site" evidence="1">
    <location>
        <position position="191"/>
    </location>
    <ligand>
        <name>substrate</name>
    </ligand>
</feature>
<feature type="binding site" evidence="1">
    <location>
        <position position="218"/>
    </location>
    <ligand>
        <name>substrate</name>
    </ligand>
</feature>
<feature type="binding site" evidence="1">
    <location>
        <position position="306"/>
    </location>
    <ligand>
        <name>Zn(2+)</name>
        <dbReference type="ChEBI" id="CHEBI:29105"/>
    </ligand>
</feature>
<feature type="binding site" evidence="1">
    <location>
        <position position="308"/>
    </location>
    <ligand>
        <name>Zn(2+)</name>
        <dbReference type="ChEBI" id="CHEBI:29105"/>
    </ligand>
</feature>
<feature type="binding site" evidence="1">
    <location>
        <position position="311"/>
    </location>
    <ligand>
        <name>Zn(2+)</name>
        <dbReference type="ChEBI" id="CHEBI:29105"/>
    </ligand>
</feature>
<feature type="binding site" evidence="1">
    <location>
        <position position="337"/>
    </location>
    <ligand>
        <name>Zn(2+)</name>
        <dbReference type="ChEBI" id="CHEBI:29105"/>
    </ligand>
</feature>